<proteinExistence type="inferred from homology"/>
<feature type="chain" id="PRO_0000152903" description="Sulfur carrier protein FdhD">
    <location>
        <begin position="1"/>
        <end position="263"/>
    </location>
</feature>
<feature type="active site" description="Cysteine persulfide intermediate" evidence="1">
    <location>
        <position position="107"/>
    </location>
</feature>
<sequence>MSGFAAKRRPIAKYRNGRFVEEEDEIALEFPLTITVNGEEFATIVCTPAHLDELVIGFLASEGAIRTCSDIKGMTIDGERGFAYVELAAGGLPAKQFYAKRFIGSCCGKSRQFYFYNDMKTAKTIVGGITVKADDCIRLMKALHERSTDFAATGGLHNAALATPDEMVVIRSDIGRHNALDKLYGYCLRHQVAMKDKLIVFSGRVSSEVLLKAAKMGVSVLLSKSAPTTLALDLADELGITVVGFLRGQAFNVYTHESRIIIG</sequence>
<protein>
    <recommendedName>
        <fullName evidence="1">Sulfur carrier protein FdhD</fullName>
    </recommendedName>
</protein>
<reference key="1">
    <citation type="journal article" date="2004" name="Nucleic Acids Res.">
        <title>Thermoadaptation trait revealed by the genome sequence of thermophilic Geobacillus kaustophilus.</title>
        <authorList>
            <person name="Takami H."/>
            <person name="Takaki Y."/>
            <person name="Chee G.-J."/>
            <person name="Nishi S."/>
            <person name="Shimamura S."/>
            <person name="Suzuki H."/>
            <person name="Matsui S."/>
            <person name="Uchiyama I."/>
        </authorList>
    </citation>
    <scope>NUCLEOTIDE SEQUENCE [LARGE SCALE GENOMIC DNA]</scope>
    <source>
        <strain>HTA426</strain>
    </source>
</reference>
<gene>
    <name evidence="1" type="primary">fdhD</name>
    <name type="ordered locus">GK0461</name>
</gene>
<organism>
    <name type="scientific">Geobacillus kaustophilus (strain HTA426)</name>
    <dbReference type="NCBI Taxonomy" id="235909"/>
    <lineage>
        <taxon>Bacteria</taxon>
        <taxon>Bacillati</taxon>
        <taxon>Bacillota</taxon>
        <taxon>Bacilli</taxon>
        <taxon>Bacillales</taxon>
        <taxon>Anoxybacillaceae</taxon>
        <taxon>Geobacillus</taxon>
        <taxon>Geobacillus thermoleovorans group</taxon>
    </lineage>
</organism>
<keyword id="KW-0963">Cytoplasm</keyword>
<keyword id="KW-0501">Molybdenum cofactor biosynthesis</keyword>
<keyword id="KW-1185">Reference proteome</keyword>
<name>FDHD_GEOKA</name>
<evidence type="ECO:0000255" key="1">
    <source>
        <dbReference type="HAMAP-Rule" id="MF_00187"/>
    </source>
</evidence>
<comment type="function">
    <text evidence="1">Required for formate dehydrogenase (FDH) activity. Acts as a sulfur carrier protein that transfers sulfur from IscS to the molybdenum cofactor prior to its insertion into FDH.</text>
</comment>
<comment type="subcellular location">
    <subcellularLocation>
        <location evidence="1">Cytoplasm</location>
    </subcellularLocation>
</comment>
<comment type="similarity">
    <text evidence="1">Belongs to the FdhD family.</text>
</comment>
<accession>Q5L2T4</accession>
<dbReference type="EMBL" id="BA000043">
    <property type="protein sequence ID" value="BAD74746.1"/>
    <property type="molecule type" value="Genomic_DNA"/>
</dbReference>
<dbReference type="RefSeq" id="WP_011229965.1">
    <property type="nucleotide sequence ID" value="NC_006510.1"/>
</dbReference>
<dbReference type="SMR" id="Q5L2T4"/>
<dbReference type="STRING" id="235909.GK0461"/>
<dbReference type="GeneID" id="32062427"/>
<dbReference type="KEGG" id="gka:GK0461"/>
<dbReference type="eggNOG" id="COG1526">
    <property type="taxonomic scope" value="Bacteria"/>
</dbReference>
<dbReference type="HOGENOM" id="CLU_056887_4_1_9"/>
<dbReference type="Proteomes" id="UP000001172">
    <property type="component" value="Chromosome"/>
</dbReference>
<dbReference type="GO" id="GO:0005737">
    <property type="term" value="C:cytoplasm"/>
    <property type="evidence" value="ECO:0007669"/>
    <property type="project" value="UniProtKB-SubCell"/>
</dbReference>
<dbReference type="GO" id="GO:0097163">
    <property type="term" value="F:sulfur carrier activity"/>
    <property type="evidence" value="ECO:0007669"/>
    <property type="project" value="UniProtKB-UniRule"/>
</dbReference>
<dbReference type="GO" id="GO:0016783">
    <property type="term" value="F:sulfurtransferase activity"/>
    <property type="evidence" value="ECO:0007669"/>
    <property type="project" value="InterPro"/>
</dbReference>
<dbReference type="GO" id="GO:0006777">
    <property type="term" value="P:Mo-molybdopterin cofactor biosynthetic process"/>
    <property type="evidence" value="ECO:0007669"/>
    <property type="project" value="UniProtKB-UniRule"/>
</dbReference>
<dbReference type="Gene3D" id="3.10.20.10">
    <property type="match status" value="1"/>
</dbReference>
<dbReference type="Gene3D" id="3.40.140.10">
    <property type="entry name" value="Cytidine Deaminase, domain 2"/>
    <property type="match status" value="1"/>
</dbReference>
<dbReference type="HAMAP" id="MF_00187">
    <property type="entry name" value="FdhD"/>
    <property type="match status" value="1"/>
</dbReference>
<dbReference type="InterPro" id="IPR016193">
    <property type="entry name" value="Cytidine_deaminase-like"/>
</dbReference>
<dbReference type="InterPro" id="IPR003786">
    <property type="entry name" value="FdhD"/>
</dbReference>
<dbReference type="NCBIfam" id="TIGR00129">
    <property type="entry name" value="fdhD_narQ"/>
    <property type="match status" value="1"/>
</dbReference>
<dbReference type="PANTHER" id="PTHR30592">
    <property type="entry name" value="FORMATE DEHYDROGENASE"/>
    <property type="match status" value="1"/>
</dbReference>
<dbReference type="PANTHER" id="PTHR30592:SF1">
    <property type="entry name" value="SULFUR CARRIER PROTEIN FDHD"/>
    <property type="match status" value="1"/>
</dbReference>
<dbReference type="Pfam" id="PF02634">
    <property type="entry name" value="FdhD-NarQ"/>
    <property type="match status" value="1"/>
</dbReference>
<dbReference type="PIRSF" id="PIRSF015626">
    <property type="entry name" value="FdhD"/>
    <property type="match status" value="1"/>
</dbReference>
<dbReference type="SUPFAM" id="SSF53927">
    <property type="entry name" value="Cytidine deaminase-like"/>
    <property type="match status" value="1"/>
</dbReference>